<reference key="1">
    <citation type="journal article" date="2003" name="Mol. Microbiol.">
        <title>Genome-based analysis of virulence genes in a non-biofilm-forming Staphylococcus epidermidis strain (ATCC 12228).</title>
        <authorList>
            <person name="Zhang Y.-Q."/>
            <person name="Ren S.-X."/>
            <person name="Li H.-L."/>
            <person name="Wang Y.-X."/>
            <person name="Fu G."/>
            <person name="Yang J."/>
            <person name="Qin Z.-Q."/>
            <person name="Miao Y.-G."/>
            <person name="Wang W.-Y."/>
            <person name="Chen R.-S."/>
            <person name="Shen Y."/>
            <person name="Chen Z."/>
            <person name="Yuan Z.-H."/>
            <person name="Zhao G.-P."/>
            <person name="Qu D."/>
            <person name="Danchin A."/>
            <person name="Wen Y.-M."/>
        </authorList>
    </citation>
    <scope>NUCLEOTIDE SEQUENCE [LARGE SCALE GENOMIC DNA]</scope>
    <source>
        <strain>ATCC 12228 / FDA PCI 1200</strain>
    </source>
</reference>
<sequence>MVAHLNIHTSFDLLDSSLRIDALIDKAKKEGYRALAITDTNVLYGYPKFYDACIAAHIHPIFGMTIYLTDGLYTIETVVLAKNNQGLKSLYQISSAIMMRNKEEVPIEWLKRYDEHLIIIFKEAELSHKQIIDAFEGKKELYLNHNSNNTLTGKRVWMQSARYLNEDDAETIPALHAIRDNTKLDLIHEKETLDEHFPSIEELQTLNLSEDMITNANEIEELCQAEIAYHQSLLPQFVTPNGETSKDYLWTILIHRLREWELNDKTYFNRLKHEYKIITDMGFEDYFLIVSDLIHFAKTHEVMVGPGRGSSAGSLVSYLLGITTIDPLKYNLLFERFLNPERVTMPDIDIDFEDTRREKVIKYVQDKYGEHHVSGIVTFGHLLARAVARDVGRIMGFDETSLNEISKLIPHKLGITLEEAYQKPEFKAFVHRNHRNERWFEVSKKLEGLPRHTSTHAAGIIINDQPLFKFAPLTTGDTGLLTQWTMTEAERIGLLKIDFLGLRNLSIIHQIILQVKKDLNINIDIEAIPYDDKKVFDLLSNGDTTGIFQLESDGVRSVLKRLQPEHFEDIVAVTSLYRPGPMEEIPTYITRRHNPNQVAYLHPDLEPILKNTYGVIIYQEQIMLIASQVAGFSYGEADILRRAMSKKNRAILESERQHFIDGAKNNGYGEQISKQIFDLILKFADYGFPRAHAVSYSKIAYIMSYLKVHYPHYFYANILSNVIGSEKKTAAMIDEAKHQRISILPPNINQSHWYYKASNKGIYLSLGTIKGIGYQSVKLIIDERQQNGPYRDFFDFSRRIPKRVKNRKLLESLILVGAFDTFGKTRATLLQAIDQVLDLNSDVEQDEMLFDLLTPKQSYEEKEELPDQLLSDYEKEYLGFYISKHPVEKKFEKKQYLGIFQLSNGSHYQPILVQFDHIKQIRTKNGQNMAFVTMNDGRTMMDGVIFPDKFKKFETSISKEQMYIVLGKFEKRNQQMQLIINQLFEVEAYEQTKLSNSKKVILRNVTHLEPQFEHSKVESNEQHALNIYGFDESANKMTMLGQIERQRQNFDLLIQTYSPADIRFI</sequence>
<comment type="function">
    <text evidence="1">DNA polymerase III is a complex, multichain enzyme responsible for most of the replicative synthesis in bacteria. This DNA polymerase also exhibits 3' to 5' exonuclease activity. The alpha chain is the DNA polymerase (By similarity).</text>
</comment>
<comment type="catalytic activity">
    <reaction>
        <text>DNA(n) + a 2'-deoxyribonucleoside 5'-triphosphate = DNA(n+1) + diphosphate</text>
        <dbReference type="Rhea" id="RHEA:22508"/>
        <dbReference type="Rhea" id="RHEA-COMP:17339"/>
        <dbReference type="Rhea" id="RHEA-COMP:17340"/>
        <dbReference type="ChEBI" id="CHEBI:33019"/>
        <dbReference type="ChEBI" id="CHEBI:61560"/>
        <dbReference type="ChEBI" id="CHEBI:173112"/>
        <dbReference type="EC" id="2.7.7.7"/>
    </reaction>
</comment>
<comment type="subunit">
    <text evidence="1">DNA polymerase III contains a core (composed of alpha, epsilon and theta chains) that associates with a tau subunit. This core dimerizes to form the PolIII' complex. PolIII' associates with the gamma complex (composed of gamma, delta, delta', psi and chi chains) and with the beta chain to form the complete DNA polymerase III complex (By similarity).</text>
</comment>
<comment type="subcellular location">
    <subcellularLocation>
        <location evidence="1">Cytoplasm</location>
    </subcellularLocation>
</comment>
<comment type="similarity">
    <text evidence="2">Belongs to the DNA polymerase type-C family. DnaE subfamily.</text>
</comment>
<name>DPO3A_STAES</name>
<feature type="chain" id="PRO_0000103346" description="DNA polymerase III subunit alpha">
    <location>
        <begin position="1"/>
        <end position="1065"/>
    </location>
</feature>
<keyword id="KW-0963">Cytoplasm</keyword>
<keyword id="KW-0235">DNA replication</keyword>
<keyword id="KW-0239">DNA-directed DNA polymerase</keyword>
<keyword id="KW-0548">Nucleotidyltransferase</keyword>
<keyword id="KW-0808">Transferase</keyword>
<gene>
    <name type="primary">dnaE</name>
    <name type="ordered locus">SE_1378</name>
</gene>
<accession>Q8CNX0</accession>
<protein>
    <recommendedName>
        <fullName>DNA polymerase III subunit alpha</fullName>
        <ecNumber>2.7.7.7</ecNumber>
    </recommendedName>
</protein>
<dbReference type="EC" id="2.7.7.7"/>
<dbReference type="EMBL" id="AE015929">
    <property type="protein sequence ID" value="AAO04977.1"/>
    <property type="molecule type" value="Genomic_DNA"/>
</dbReference>
<dbReference type="RefSeq" id="NP_764933.1">
    <property type="nucleotide sequence ID" value="NC_004461.1"/>
</dbReference>
<dbReference type="RefSeq" id="WP_002485290.1">
    <property type="nucleotide sequence ID" value="NC_004461.1"/>
</dbReference>
<dbReference type="SMR" id="Q8CNX0"/>
<dbReference type="KEGG" id="sep:SE_1378"/>
<dbReference type="PATRIC" id="fig|176280.10.peg.1346"/>
<dbReference type="eggNOG" id="COG0587">
    <property type="taxonomic scope" value="Bacteria"/>
</dbReference>
<dbReference type="HOGENOM" id="CLU_001600_0_0_9"/>
<dbReference type="OrthoDB" id="9803237at2"/>
<dbReference type="Proteomes" id="UP000001411">
    <property type="component" value="Chromosome"/>
</dbReference>
<dbReference type="GO" id="GO:0005737">
    <property type="term" value="C:cytoplasm"/>
    <property type="evidence" value="ECO:0007669"/>
    <property type="project" value="UniProtKB-SubCell"/>
</dbReference>
<dbReference type="GO" id="GO:0008408">
    <property type="term" value="F:3'-5' exonuclease activity"/>
    <property type="evidence" value="ECO:0007669"/>
    <property type="project" value="InterPro"/>
</dbReference>
<dbReference type="GO" id="GO:0003887">
    <property type="term" value="F:DNA-directed DNA polymerase activity"/>
    <property type="evidence" value="ECO:0007669"/>
    <property type="project" value="UniProtKB-KW"/>
</dbReference>
<dbReference type="GO" id="GO:0003676">
    <property type="term" value="F:nucleic acid binding"/>
    <property type="evidence" value="ECO:0007669"/>
    <property type="project" value="InterPro"/>
</dbReference>
<dbReference type="GO" id="GO:0006260">
    <property type="term" value="P:DNA replication"/>
    <property type="evidence" value="ECO:0007669"/>
    <property type="project" value="UniProtKB-KW"/>
</dbReference>
<dbReference type="CDD" id="cd04485">
    <property type="entry name" value="DnaE_OBF"/>
    <property type="match status" value="1"/>
</dbReference>
<dbReference type="CDD" id="cd07431">
    <property type="entry name" value="PHP_PolIIIA"/>
    <property type="match status" value="1"/>
</dbReference>
<dbReference type="Gene3D" id="1.10.150.870">
    <property type="match status" value="1"/>
</dbReference>
<dbReference type="Gene3D" id="1.10.10.1600">
    <property type="entry name" value="Bacterial DNA polymerase III alpha subunit, thumb domain"/>
    <property type="match status" value="1"/>
</dbReference>
<dbReference type="Gene3D" id="3.20.20.140">
    <property type="entry name" value="Metal-dependent hydrolases"/>
    <property type="match status" value="1"/>
</dbReference>
<dbReference type="InterPro" id="IPR011708">
    <property type="entry name" value="DNA_pol3_alpha_NTPase_dom"/>
</dbReference>
<dbReference type="InterPro" id="IPR041931">
    <property type="entry name" value="DNA_pol3_alpha_thumb_dom"/>
</dbReference>
<dbReference type="InterPro" id="IPR040982">
    <property type="entry name" value="DNA_pol3_finger"/>
</dbReference>
<dbReference type="InterPro" id="IPR004805">
    <property type="entry name" value="DnaE2/DnaE/PolC"/>
</dbReference>
<dbReference type="InterPro" id="IPR029460">
    <property type="entry name" value="DNAPol_HHH"/>
</dbReference>
<dbReference type="InterPro" id="IPR004365">
    <property type="entry name" value="NA-bd_OB_tRNA"/>
</dbReference>
<dbReference type="InterPro" id="IPR004013">
    <property type="entry name" value="PHP_dom"/>
</dbReference>
<dbReference type="InterPro" id="IPR003141">
    <property type="entry name" value="Pol/His_phosphatase_N"/>
</dbReference>
<dbReference type="InterPro" id="IPR016195">
    <property type="entry name" value="Pol/histidinol_Pase-like"/>
</dbReference>
<dbReference type="NCBIfam" id="TIGR00594">
    <property type="entry name" value="polc"/>
    <property type="match status" value="1"/>
</dbReference>
<dbReference type="PANTHER" id="PTHR32294">
    <property type="entry name" value="DNA POLYMERASE III SUBUNIT ALPHA"/>
    <property type="match status" value="1"/>
</dbReference>
<dbReference type="PANTHER" id="PTHR32294:SF0">
    <property type="entry name" value="DNA POLYMERASE III SUBUNIT ALPHA"/>
    <property type="match status" value="1"/>
</dbReference>
<dbReference type="Pfam" id="PF07733">
    <property type="entry name" value="DNA_pol3_alpha"/>
    <property type="match status" value="1"/>
</dbReference>
<dbReference type="Pfam" id="PF17657">
    <property type="entry name" value="DNA_pol3_finger"/>
    <property type="match status" value="1"/>
</dbReference>
<dbReference type="Pfam" id="PF14579">
    <property type="entry name" value="HHH_6"/>
    <property type="match status" value="1"/>
</dbReference>
<dbReference type="Pfam" id="PF02811">
    <property type="entry name" value="PHP"/>
    <property type="match status" value="1"/>
</dbReference>
<dbReference type="Pfam" id="PF01336">
    <property type="entry name" value="tRNA_anti-codon"/>
    <property type="match status" value="1"/>
</dbReference>
<dbReference type="SMART" id="SM00481">
    <property type="entry name" value="POLIIIAc"/>
    <property type="match status" value="1"/>
</dbReference>
<dbReference type="SUPFAM" id="SSF160975">
    <property type="entry name" value="AF1531-like"/>
    <property type="match status" value="1"/>
</dbReference>
<dbReference type="SUPFAM" id="SSF89550">
    <property type="entry name" value="PHP domain-like"/>
    <property type="match status" value="1"/>
</dbReference>
<proteinExistence type="inferred from homology"/>
<evidence type="ECO:0000250" key="1"/>
<evidence type="ECO:0000305" key="2"/>
<organism>
    <name type="scientific">Staphylococcus epidermidis (strain ATCC 12228 / FDA PCI 1200)</name>
    <dbReference type="NCBI Taxonomy" id="176280"/>
    <lineage>
        <taxon>Bacteria</taxon>
        <taxon>Bacillati</taxon>
        <taxon>Bacillota</taxon>
        <taxon>Bacilli</taxon>
        <taxon>Bacillales</taxon>
        <taxon>Staphylococcaceae</taxon>
        <taxon>Staphylococcus</taxon>
    </lineage>
</organism>